<accession>Q824P3</accession>
<keyword id="KW-0687">Ribonucleoprotein</keyword>
<keyword id="KW-0689">Ribosomal protein</keyword>
<gene>
    <name evidence="1" type="primary">rpmC</name>
    <name type="ordered locus">CCA_00101</name>
</gene>
<sequence length="72" mass="8247">MAAKKKLLAELREKSLVELDAFIHENKKALFSLRAEAALQNKVVKKHLFSMYKKNIARSMTVMQEKEGKIDG</sequence>
<reference key="1">
    <citation type="journal article" date="2003" name="Nucleic Acids Res.">
        <title>Genome sequence of Chlamydophila caviae (Chlamydia psittaci GPIC): examining the role of niche-specific genes in the evolution of the Chlamydiaceae.</title>
        <authorList>
            <person name="Read T.D."/>
            <person name="Myers G.S.A."/>
            <person name="Brunham R.C."/>
            <person name="Nelson W.C."/>
            <person name="Paulsen I.T."/>
            <person name="Heidelberg J.F."/>
            <person name="Holtzapple E.K."/>
            <person name="Khouri H.M."/>
            <person name="Federova N.B."/>
            <person name="Carty H.A."/>
            <person name="Umayam L.A."/>
            <person name="Haft D.H."/>
            <person name="Peterson J.D."/>
            <person name="Beanan M.J."/>
            <person name="White O."/>
            <person name="Salzberg S.L."/>
            <person name="Hsia R.-C."/>
            <person name="McClarty G."/>
            <person name="Rank R.G."/>
            <person name="Bavoil P.M."/>
            <person name="Fraser C.M."/>
        </authorList>
    </citation>
    <scope>NUCLEOTIDE SEQUENCE [LARGE SCALE GENOMIC DNA]</scope>
    <source>
        <strain>ATCC VR-813 / DSM 19441 / 03DC25 / GPIC</strain>
    </source>
</reference>
<proteinExistence type="inferred from homology"/>
<name>RL29_CHLCV</name>
<dbReference type="EMBL" id="AE015925">
    <property type="protein sequence ID" value="AAP04853.1"/>
    <property type="molecule type" value="Genomic_DNA"/>
</dbReference>
<dbReference type="RefSeq" id="WP_011006074.1">
    <property type="nucleotide sequence ID" value="NC_003361.3"/>
</dbReference>
<dbReference type="SMR" id="Q824P3"/>
<dbReference type="STRING" id="227941.CCA_00101"/>
<dbReference type="KEGG" id="cca:CCA_00101"/>
<dbReference type="eggNOG" id="COG0255">
    <property type="taxonomic scope" value="Bacteria"/>
</dbReference>
<dbReference type="HOGENOM" id="CLU_2715043_0_0_0"/>
<dbReference type="OrthoDB" id="18593at2"/>
<dbReference type="Proteomes" id="UP000002193">
    <property type="component" value="Chromosome"/>
</dbReference>
<dbReference type="GO" id="GO:1990904">
    <property type="term" value="C:ribonucleoprotein complex"/>
    <property type="evidence" value="ECO:0007669"/>
    <property type="project" value="UniProtKB-KW"/>
</dbReference>
<dbReference type="GO" id="GO:0005840">
    <property type="term" value="C:ribosome"/>
    <property type="evidence" value="ECO:0007669"/>
    <property type="project" value="UniProtKB-KW"/>
</dbReference>
<dbReference type="GO" id="GO:0003735">
    <property type="term" value="F:structural constituent of ribosome"/>
    <property type="evidence" value="ECO:0007669"/>
    <property type="project" value="InterPro"/>
</dbReference>
<dbReference type="GO" id="GO:0006412">
    <property type="term" value="P:translation"/>
    <property type="evidence" value="ECO:0007669"/>
    <property type="project" value="UniProtKB-UniRule"/>
</dbReference>
<dbReference type="Gene3D" id="1.10.287.310">
    <property type="match status" value="1"/>
</dbReference>
<dbReference type="HAMAP" id="MF_00374">
    <property type="entry name" value="Ribosomal_uL29"/>
    <property type="match status" value="1"/>
</dbReference>
<dbReference type="InterPro" id="IPR001854">
    <property type="entry name" value="Ribosomal_uL29"/>
</dbReference>
<dbReference type="InterPro" id="IPR036049">
    <property type="entry name" value="Ribosomal_uL29_sf"/>
</dbReference>
<dbReference type="NCBIfam" id="TIGR00012">
    <property type="entry name" value="L29"/>
    <property type="match status" value="1"/>
</dbReference>
<dbReference type="Pfam" id="PF00831">
    <property type="entry name" value="Ribosomal_L29"/>
    <property type="match status" value="1"/>
</dbReference>
<dbReference type="SUPFAM" id="SSF46561">
    <property type="entry name" value="Ribosomal protein L29 (L29p)"/>
    <property type="match status" value="1"/>
</dbReference>
<protein>
    <recommendedName>
        <fullName evidence="1">Large ribosomal subunit protein uL29</fullName>
    </recommendedName>
    <alternativeName>
        <fullName evidence="2">50S ribosomal protein L29</fullName>
    </alternativeName>
</protein>
<feature type="chain" id="PRO_0000130371" description="Large ribosomal subunit protein uL29">
    <location>
        <begin position="1"/>
        <end position="72"/>
    </location>
</feature>
<organism>
    <name type="scientific">Chlamydia caviae (strain ATCC VR-813 / DSM 19441 / 03DC25 / GPIC)</name>
    <name type="common">Chlamydophila caviae</name>
    <dbReference type="NCBI Taxonomy" id="227941"/>
    <lineage>
        <taxon>Bacteria</taxon>
        <taxon>Pseudomonadati</taxon>
        <taxon>Chlamydiota</taxon>
        <taxon>Chlamydiia</taxon>
        <taxon>Chlamydiales</taxon>
        <taxon>Chlamydiaceae</taxon>
        <taxon>Chlamydia/Chlamydophila group</taxon>
        <taxon>Chlamydia</taxon>
    </lineage>
</organism>
<evidence type="ECO:0000255" key="1">
    <source>
        <dbReference type="HAMAP-Rule" id="MF_00374"/>
    </source>
</evidence>
<evidence type="ECO:0000305" key="2"/>
<comment type="similarity">
    <text evidence="1">Belongs to the universal ribosomal protein uL29 family.</text>
</comment>